<sequence>MKRIAIYGKGGIGKSTIVSNMAAAYSSEHRVLVIGCDPKADTTRTLYGERLPTVLDVLKENREPDVSEVIHTGFGGVRCVESGGPEPGVGCAGRGVIVAMNLLERLGVFREDIDVVIYDVLGDVVCGGFAVPLREDFADEVYIVTSGEYMSLYAANNIARGIRKLKGKLGGVICNCRGIRDEVEIVSEFASRIGSRLIGAVPRSNLVQESELEARTVIERFPESEQASVYRKLAEDIYRNTEFTVPEPMDQEEFEEFFRKFRVEG</sequence>
<proteinExistence type="inferred from homology"/>
<accession>O26739</accession>
<comment type="function">
    <text evidence="1">The key enzymatic reactions in nitrogen fixation are catalyzed by the nitrogenase complex, which has 2 components: the iron protein and the molybdenum-iron protein.</text>
</comment>
<comment type="catalytic activity">
    <reaction>
        <text>N2 + 8 reduced [2Fe-2S]-[ferredoxin] + 16 ATP + 16 H2O = H2 + 8 oxidized [2Fe-2S]-[ferredoxin] + 2 NH4(+) + 16 ADP + 16 phosphate + 6 H(+)</text>
        <dbReference type="Rhea" id="RHEA:21448"/>
        <dbReference type="Rhea" id="RHEA-COMP:10000"/>
        <dbReference type="Rhea" id="RHEA-COMP:10001"/>
        <dbReference type="ChEBI" id="CHEBI:15377"/>
        <dbReference type="ChEBI" id="CHEBI:15378"/>
        <dbReference type="ChEBI" id="CHEBI:17997"/>
        <dbReference type="ChEBI" id="CHEBI:18276"/>
        <dbReference type="ChEBI" id="CHEBI:28938"/>
        <dbReference type="ChEBI" id="CHEBI:30616"/>
        <dbReference type="ChEBI" id="CHEBI:33737"/>
        <dbReference type="ChEBI" id="CHEBI:33738"/>
        <dbReference type="ChEBI" id="CHEBI:43474"/>
        <dbReference type="ChEBI" id="CHEBI:456216"/>
        <dbReference type="EC" id="1.18.6.1"/>
    </reaction>
</comment>
<comment type="cofactor">
    <cofactor evidence="1">
        <name>[4Fe-4S] cluster</name>
        <dbReference type="ChEBI" id="CHEBI:49883"/>
    </cofactor>
    <text evidence="1">Binds 1 [4Fe-4S] cluster per dimer.</text>
</comment>
<comment type="subunit">
    <text evidence="1">Homodimer.</text>
</comment>
<comment type="PTM">
    <text evidence="1">The reversible ADP-ribosylation of Arg-94 inactivates the nitrogenase reductase and regulates nitrogenase activity.</text>
</comment>
<comment type="similarity">
    <text evidence="3">Belongs to the NifH/BchL/ChlL family.</text>
</comment>
<keyword id="KW-0004">4Fe-4S</keyword>
<keyword id="KW-0013">ADP-ribosylation</keyword>
<keyword id="KW-0067">ATP-binding</keyword>
<keyword id="KW-0408">Iron</keyword>
<keyword id="KW-0411">Iron-sulfur</keyword>
<keyword id="KW-0479">Metal-binding</keyword>
<keyword id="KW-0535">Nitrogen fixation</keyword>
<keyword id="KW-0547">Nucleotide-binding</keyword>
<keyword id="KW-0560">Oxidoreductase</keyword>
<keyword id="KW-1185">Reference proteome</keyword>
<reference key="1">
    <citation type="journal article" date="1997" name="J. Bacteriol.">
        <title>Complete genome sequence of Methanobacterium thermoautotrophicum deltaH: functional analysis and comparative genomics.</title>
        <authorList>
            <person name="Smith D.R."/>
            <person name="Doucette-Stamm L.A."/>
            <person name="Deloughery C."/>
            <person name="Lee H.-M."/>
            <person name="Dubois J."/>
            <person name="Aldredge T."/>
            <person name="Bashirzadeh R."/>
            <person name="Blakely D."/>
            <person name="Cook R."/>
            <person name="Gilbert K."/>
            <person name="Harrison D."/>
            <person name="Hoang L."/>
            <person name="Keagle P."/>
            <person name="Lumm W."/>
            <person name="Pothier B."/>
            <person name="Qiu D."/>
            <person name="Spadafora R."/>
            <person name="Vicare R."/>
            <person name="Wang Y."/>
            <person name="Wierzbowski J."/>
            <person name="Gibson R."/>
            <person name="Jiwani N."/>
            <person name="Caruso A."/>
            <person name="Bush D."/>
            <person name="Safer H."/>
            <person name="Patwell D."/>
            <person name="Prabhakar S."/>
            <person name="McDougall S."/>
            <person name="Shimer G."/>
            <person name="Goyal A."/>
            <person name="Pietrovski S."/>
            <person name="Church G.M."/>
            <person name="Daniels C.J."/>
            <person name="Mao J.-I."/>
            <person name="Rice P."/>
            <person name="Noelling J."/>
            <person name="Reeve J.N."/>
        </authorList>
    </citation>
    <scope>NUCLEOTIDE SEQUENCE [LARGE SCALE GENOMIC DNA]</scope>
    <source>
        <strain>ATCC 29096 / DSM 1053 / JCM 10044 / NBRC 100330 / Delta H</strain>
    </source>
</reference>
<name>NIFH2_METTH</name>
<organism>
    <name type="scientific">Methanothermobacter thermautotrophicus (strain ATCC 29096 / DSM 1053 / JCM 10044 / NBRC 100330 / Delta H)</name>
    <name type="common">Methanobacterium thermoautotrophicum</name>
    <dbReference type="NCBI Taxonomy" id="187420"/>
    <lineage>
        <taxon>Archaea</taxon>
        <taxon>Methanobacteriati</taxon>
        <taxon>Methanobacteriota</taxon>
        <taxon>Methanomada group</taxon>
        <taxon>Methanobacteria</taxon>
        <taxon>Methanobacteriales</taxon>
        <taxon>Methanobacteriaceae</taxon>
        <taxon>Methanothermobacter</taxon>
    </lineage>
</organism>
<feature type="chain" id="PRO_0000139543" description="Nitrogenase iron protein 2">
    <location>
        <begin position="1"/>
        <end position="265"/>
    </location>
</feature>
<feature type="binding site" evidence="2">
    <location>
        <begin position="8"/>
        <end position="15"/>
    </location>
    <ligand>
        <name>ATP</name>
        <dbReference type="ChEBI" id="CHEBI:30616"/>
    </ligand>
</feature>
<feature type="binding site" evidence="1">
    <location>
        <position position="91"/>
    </location>
    <ligand>
        <name>[4Fe-4S] cluster</name>
        <dbReference type="ChEBI" id="CHEBI:49883"/>
        <note>ligand shared between dimeric partners</note>
    </ligand>
</feature>
<feature type="binding site" evidence="1">
    <location>
        <position position="126"/>
    </location>
    <ligand>
        <name>[4Fe-4S] cluster</name>
        <dbReference type="ChEBI" id="CHEBI:49883"/>
        <note>ligand shared between dimeric partners</note>
    </ligand>
</feature>
<feature type="modified residue" description="ADP-ribosylarginine; by dinitrogenase reductase ADP-ribosyltransferase" evidence="1">
    <location>
        <position position="94"/>
    </location>
</feature>
<gene>
    <name type="primary">nifH2</name>
    <name type="ordered locus">MTH_643</name>
</gene>
<dbReference type="EC" id="1.18.6.1"/>
<dbReference type="EMBL" id="AE000666">
    <property type="protein sequence ID" value="AAB85148.1"/>
    <property type="molecule type" value="Genomic_DNA"/>
</dbReference>
<dbReference type="PIR" id="E69185">
    <property type="entry name" value="E69185"/>
</dbReference>
<dbReference type="RefSeq" id="WP_010876281.1">
    <property type="nucleotide sequence ID" value="NC_000916.1"/>
</dbReference>
<dbReference type="SMR" id="O26739"/>
<dbReference type="STRING" id="187420.MTH_643"/>
<dbReference type="PaxDb" id="187420-MTH_643"/>
<dbReference type="EnsemblBacteria" id="AAB85148">
    <property type="protein sequence ID" value="AAB85148"/>
    <property type="gene ID" value="MTH_643"/>
</dbReference>
<dbReference type="GeneID" id="1470604"/>
<dbReference type="KEGG" id="mth:MTH_643"/>
<dbReference type="PATRIC" id="fig|187420.15.peg.623"/>
<dbReference type="HOGENOM" id="CLU_059373_0_0_2"/>
<dbReference type="InParanoid" id="O26739"/>
<dbReference type="Proteomes" id="UP000005223">
    <property type="component" value="Chromosome"/>
</dbReference>
<dbReference type="GO" id="GO:0051539">
    <property type="term" value="F:4 iron, 4 sulfur cluster binding"/>
    <property type="evidence" value="ECO:0007669"/>
    <property type="project" value="UniProtKB-KW"/>
</dbReference>
<dbReference type="GO" id="GO:0005524">
    <property type="term" value="F:ATP binding"/>
    <property type="evidence" value="ECO:0007669"/>
    <property type="project" value="UniProtKB-UniRule"/>
</dbReference>
<dbReference type="GO" id="GO:0046872">
    <property type="term" value="F:metal ion binding"/>
    <property type="evidence" value="ECO:0007669"/>
    <property type="project" value="UniProtKB-KW"/>
</dbReference>
<dbReference type="GO" id="GO:0016163">
    <property type="term" value="F:nitrogenase activity"/>
    <property type="evidence" value="ECO:0007669"/>
    <property type="project" value="UniProtKB-UniRule"/>
</dbReference>
<dbReference type="GO" id="GO:0009399">
    <property type="term" value="P:nitrogen fixation"/>
    <property type="evidence" value="ECO:0007669"/>
    <property type="project" value="UniProtKB-UniRule"/>
</dbReference>
<dbReference type="CDD" id="cd02040">
    <property type="entry name" value="NifH"/>
    <property type="match status" value="1"/>
</dbReference>
<dbReference type="Gene3D" id="3.40.50.300">
    <property type="entry name" value="P-loop containing nucleotide triphosphate hydrolases"/>
    <property type="match status" value="1"/>
</dbReference>
<dbReference type="HAMAP" id="MF_00533">
    <property type="entry name" value="NifH"/>
    <property type="match status" value="1"/>
</dbReference>
<dbReference type="InterPro" id="IPR030655">
    <property type="entry name" value="NifH/chlL_CS"/>
</dbReference>
<dbReference type="InterPro" id="IPR000392">
    <property type="entry name" value="NifH/frxC"/>
</dbReference>
<dbReference type="InterPro" id="IPR005977">
    <property type="entry name" value="Nitrogenase_Fe_NifH"/>
</dbReference>
<dbReference type="InterPro" id="IPR027417">
    <property type="entry name" value="P-loop_NTPase"/>
</dbReference>
<dbReference type="NCBIfam" id="NF033200">
    <property type="entry name" value="F430_CfbC"/>
    <property type="match status" value="1"/>
</dbReference>
<dbReference type="NCBIfam" id="TIGR01287">
    <property type="entry name" value="nifH"/>
    <property type="match status" value="1"/>
</dbReference>
<dbReference type="NCBIfam" id="NF009702">
    <property type="entry name" value="PRK13231.1"/>
    <property type="match status" value="1"/>
</dbReference>
<dbReference type="PANTHER" id="PTHR42864">
    <property type="entry name" value="LIGHT-INDEPENDENT PROTOCHLOROPHYLLIDE REDUCTASE IRON-SULFUR ATP-BINDING PROTEIN"/>
    <property type="match status" value="1"/>
</dbReference>
<dbReference type="PANTHER" id="PTHR42864:SF2">
    <property type="entry name" value="LIGHT-INDEPENDENT PROTOCHLOROPHYLLIDE REDUCTASE IRON-SULFUR ATP-BINDING PROTEIN"/>
    <property type="match status" value="1"/>
</dbReference>
<dbReference type="Pfam" id="PF00142">
    <property type="entry name" value="Fer4_NifH"/>
    <property type="match status" value="1"/>
</dbReference>
<dbReference type="PIRSF" id="PIRSF000363">
    <property type="entry name" value="Nitrogenase_iron"/>
    <property type="match status" value="1"/>
</dbReference>
<dbReference type="PRINTS" id="PR00091">
    <property type="entry name" value="NITROGNASEII"/>
</dbReference>
<dbReference type="SUPFAM" id="SSF52540">
    <property type="entry name" value="P-loop containing nucleoside triphosphate hydrolases"/>
    <property type="match status" value="1"/>
</dbReference>
<dbReference type="PROSITE" id="PS00746">
    <property type="entry name" value="NIFH_FRXC_1"/>
    <property type="match status" value="1"/>
</dbReference>
<dbReference type="PROSITE" id="PS00692">
    <property type="entry name" value="NIFH_FRXC_2"/>
    <property type="match status" value="1"/>
</dbReference>
<dbReference type="PROSITE" id="PS51026">
    <property type="entry name" value="NIFH_FRXC_3"/>
    <property type="match status" value="1"/>
</dbReference>
<protein>
    <recommendedName>
        <fullName>Nitrogenase iron protein 2</fullName>
        <ecNumber>1.18.6.1</ecNumber>
    </recommendedName>
    <alternativeName>
        <fullName>Nitrogenase Fe protein 2</fullName>
    </alternativeName>
    <alternativeName>
        <fullName>Nitrogenase component II</fullName>
    </alternativeName>
    <alternativeName>
        <fullName>Nitrogenase reductase</fullName>
    </alternativeName>
</protein>
<evidence type="ECO:0000250" key="1"/>
<evidence type="ECO:0000255" key="2"/>
<evidence type="ECO:0000305" key="3"/>